<accession>A8IAQ2</accession>
<dbReference type="EMBL" id="AP009384">
    <property type="protein sequence ID" value="BAF88539.1"/>
    <property type="status" value="ALT_INIT"/>
    <property type="molecule type" value="Genomic_DNA"/>
</dbReference>
<dbReference type="RefSeq" id="WP_043879324.1">
    <property type="nucleotide sequence ID" value="NC_009937.1"/>
</dbReference>
<dbReference type="SMR" id="A8IAQ2"/>
<dbReference type="STRING" id="438753.AZC_2541"/>
<dbReference type="KEGG" id="azc:AZC_2541"/>
<dbReference type="eggNOG" id="COG0199">
    <property type="taxonomic scope" value="Bacteria"/>
</dbReference>
<dbReference type="HOGENOM" id="CLU_139869_0_1_5"/>
<dbReference type="Proteomes" id="UP000000270">
    <property type="component" value="Chromosome"/>
</dbReference>
<dbReference type="GO" id="GO:0005737">
    <property type="term" value="C:cytoplasm"/>
    <property type="evidence" value="ECO:0007669"/>
    <property type="project" value="UniProtKB-ARBA"/>
</dbReference>
<dbReference type="GO" id="GO:0015935">
    <property type="term" value="C:small ribosomal subunit"/>
    <property type="evidence" value="ECO:0007669"/>
    <property type="project" value="TreeGrafter"/>
</dbReference>
<dbReference type="GO" id="GO:0019843">
    <property type="term" value="F:rRNA binding"/>
    <property type="evidence" value="ECO:0007669"/>
    <property type="project" value="UniProtKB-UniRule"/>
</dbReference>
<dbReference type="GO" id="GO:0003735">
    <property type="term" value="F:structural constituent of ribosome"/>
    <property type="evidence" value="ECO:0007669"/>
    <property type="project" value="InterPro"/>
</dbReference>
<dbReference type="GO" id="GO:0006412">
    <property type="term" value="P:translation"/>
    <property type="evidence" value="ECO:0007669"/>
    <property type="project" value="UniProtKB-UniRule"/>
</dbReference>
<dbReference type="FunFam" id="1.10.287.1480:FF:000001">
    <property type="entry name" value="30S ribosomal protein S14"/>
    <property type="match status" value="1"/>
</dbReference>
<dbReference type="Gene3D" id="1.10.287.1480">
    <property type="match status" value="1"/>
</dbReference>
<dbReference type="HAMAP" id="MF_00537">
    <property type="entry name" value="Ribosomal_uS14_1"/>
    <property type="match status" value="1"/>
</dbReference>
<dbReference type="InterPro" id="IPR001209">
    <property type="entry name" value="Ribosomal_uS14"/>
</dbReference>
<dbReference type="InterPro" id="IPR023036">
    <property type="entry name" value="Ribosomal_uS14_bac/plastid"/>
</dbReference>
<dbReference type="InterPro" id="IPR018271">
    <property type="entry name" value="Ribosomal_uS14_CS"/>
</dbReference>
<dbReference type="NCBIfam" id="NF006477">
    <property type="entry name" value="PRK08881.1"/>
    <property type="match status" value="1"/>
</dbReference>
<dbReference type="PANTHER" id="PTHR19836">
    <property type="entry name" value="30S RIBOSOMAL PROTEIN S14"/>
    <property type="match status" value="1"/>
</dbReference>
<dbReference type="PANTHER" id="PTHR19836:SF19">
    <property type="entry name" value="SMALL RIBOSOMAL SUBUNIT PROTEIN US14M"/>
    <property type="match status" value="1"/>
</dbReference>
<dbReference type="Pfam" id="PF00253">
    <property type="entry name" value="Ribosomal_S14"/>
    <property type="match status" value="1"/>
</dbReference>
<dbReference type="SUPFAM" id="SSF57716">
    <property type="entry name" value="Glucocorticoid receptor-like (DNA-binding domain)"/>
    <property type="match status" value="1"/>
</dbReference>
<dbReference type="PROSITE" id="PS00527">
    <property type="entry name" value="RIBOSOMAL_S14"/>
    <property type="match status" value="1"/>
</dbReference>
<organism>
    <name type="scientific">Azorhizobium caulinodans (strain ATCC 43989 / DSM 5975 / JCM 20966 / LMG 6465 / NBRC 14845 / NCIMB 13405 / ORS 571)</name>
    <dbReference type="NCBI Taxonomy" id="438753"/>
    <lineage>
        <taxon>Bacteria</taxon>
        <taxon>Pseudomonadati</taxon>
        <taxon>Pseudomonadota</taxon>
        <taxon>Alphaproteobacteria</taxon>
        <taxon>Hyphomicrobiales</taxon>
        <taxon>Xanthobacteraceae</taxon>
        <taxon>Azorhizobium</taxon>
    </lineage>
</organism>
<gene>
    <name evidence="1" type="primary">rpsN</name>
    <name type="ordered locus">AZC_2541</name>
</gene>
<evidence type="ECO:0000255" key="1">
    <source>
        <dbReference type="HAMAP-Rule" id="MF_00537"/>
    </source>
</evidence>
<evidence type="ECO:0000256" key="2">
    <source>
        <dbReference type="SAM" id="MobiDB-lite"/>
    </source>
</evidence>
<evidence type="ECO:0000305" key="3"/>
<name>RS14_AZOC5</name>
<proteinExistence type="inferred from homology"/>
<comment type="function">
    <text evidence="1">Binds 16S rRNA, required for the assembly of 30S particles and may also be responsible for determining the conformation of the 16S rRNA at the A site.</text>
</comment>
<comment type="subunit">
    <text evidence="1">Part of the 30S ribosomal subunit. Contacts proteins S3 and S10.</text>
</comment>
<comment type="similarity">
    <text evidence="1">Belongs to the universal ribosomal protein uS14 family.</text>
</comment>
<comment type="sequence caution" evidence="3">
    <conflict type="erroneous initiation">
        <sequence resource="EMBL-CDS" id="BAF88539"/>
    </conflict>
</comment>
<keyword id="KW-1185">Reference proteome</keyword>
<keyword id="KW-0687">Ribonucleoprotein</keyword>
<keyword id="KW-0689">Ribosomal protein</keyword>
<keyword id="KW-0694">RNA-binding</keyword>
<keyword id="KW-0699">rRNA-binding</keyword>
<feature type="chain" id="PRO_0000354380" description="Small ribosomal subunit protein uS14">
    <location>
        <begin position="1"/>
        <end position="101"/>
    </location>
</feature>
<feature type="region of interest" description="Disordered" evidence="2">
    <location>
        <begin position="1"/>
        <end position="24"/>
    </location>
</feature>
<feature type="compositionally biased region" description="Basic and acidic residues" evidence="2">
    <location>
        <begin position="1"/>
        <end position="11"/>
    </location>
</feature>
<feature type="compositionally biased region" description="Basic residues" evidence="2">
    <location>
        <begin position="12"/>
        <end position="24"/>
    </location>
</feature>
<reference key="1">
    <citation type="submission" date="2007-04" db="EMBL/GenBank/DDBJ databases">
        <title>Complete genome sequence of the nitrogen-fixing bacterium Azorhizobium caulinodans ORS571.</title>
        <authorList>
            <person name="Lee K.B."/>
            <person name="Backer P.D."/>
            <person name="Aono T."/>
            <person name="Liu C.T."/>
            <person name="Suzuki S."/>
            <person name="Suzuki T."/>
            <person name="Kaneko T."/>
            <person name="Yamada M."/>
            <person name="Tabata S."/>
            <person name="Kupfer D.M."/>
            <person name="Najar F.Z."/>
            <person name="Wiley G.B."/>
            <person name="Roe B."/>
            <person name="Binnewies T."/>
            <person name="Ussery D."/>
            <person name="Vereecke D."/>
            <person name="Gevers D."/>
            <person name="Holsters M."/>
            <person name="Oyaizu H."/>
        </authorList>
    </citation>
    <scope>NUCLEOTIDE SEQUENCE [LARGE SCALE GENOMIC DNA]</scope>
    <source>
        <strain>ATCC 43989 / DSM 5975 / JCM 20966 / LMG 6465 / NBRC 14845 / NCIMB 13405 / ORS 571</strain>
    </source>
</reference>
<sequence length="101" mass="11451">MAKKSAIETNERRRKLSQSKAAKRASLKAIVNDKTLPIEERFAATLKLAQMPRNSAKIRVRNRCEVTGRPRAFYRKLKMSRVALRELGSQGLVPGLVKSSW</sequence>
<protein>
    <recommendedName>
        <fullName evidence="1">Small ribosomal subunit protein uS14</fullName>
    </recommendedName>
    <alternativeName>
        <fullName evidence="3">30S ribosomal protein S14</fullName>
    </alternativeName>
</protein>